<proteinExistence type="inferred from homology"/>
<keyword id="KW-0285">Flavoprotein</keyword>
<keyword id="KW-0288">FMN</keyword>
<keyword id="KW-0503">Monooxygenase</keyword>
<keyword id="KW-0560">Oxidoreductase</keyword>
<comment type="function">
    <text evidence="1">Catalyzes the desulfonation of aliphatic sulfonates.</text>
</comment>
<comment type="catalytic activity">
    <reaction evidence="1">
        <text>an alkanesulfonate + FMNH2 + O2 = an aldehyde + FMN + sulfite + H2O + 2 H(+)</text>
        <dbReference type="Rhea" id="RHEA:23064"/>
        <dbReference type="ChEBI" id="CHEBI:15377"/>
        <dbReference type="ChEBI" id="CHEBI:15378"/>
        <dbReference type="ChEBI" id="CHEBI:15379"/>
        <dbReference type="ChEBI" id="CHEBI:17359"/>
        <dbReference type="ChEBI" id="CHEBI:17478"/>
        <dbReference type="ChEBI" id="CHEBI:57618"/>
        <dbReference type="ChEBI" id="CHEBI:58210"/>
        <dbReference type="ChEBI" id="CHEBI:134249"/>
        <dbReference type="EC" id="1.14.14.5"/>
    </reaction>
</comment>
<comment type="subunit">
    <text evidence="1">Homotetramer.</text>
</comment>
<comment type="miscellaneous">
    <text evidence="1">FMNH(2) which is absolutely required for this enzymatic reaction, is provided by SsuE.</text>
</comment>
<comment type="similarity">
    <text evidence="1">Belongs to the SsuD family.</text>
</comment>
<name>SSUD_ESCF3</name>
<dbReference type="EC" id="1.14.14.5" evidence="1"/>
<dbReference type="EMBL" id="CU928158">
    <property type="protein sequence ID" value="CAQ88608.1"/>
    <property type="molecule type" value="Genomic_DNA"/>
</dbReference>
<dbReference type="RefSeq" id="WP_000056012.1">
    <property type="nucleotide sequence ID" value="NC_011740.1"/>
</dbReference>
<dbReference type="SMR" id="B7LNV2"/>
<dbReference type="GeneID" id="75057870"/>
<dbReference type="KEGG" id="efe:EFER_1079"/>
<dbReference type="HOGENOM" id="CLU_027853_1_0_6"/>
<dbReference type="OrthoDB" id="9814695at2"/>
<dbReference type="Proteomes" id="UP000000745">
    <property type="component" value="Chromosome"/>
</dbReference>
<dbReference type="GO" id="GO:0008726">
    <property type="term" value="F:alkanesulfonate monooxygenase activity"/>
    <property type="evidence" value="ECO:0007669"/>
    <property type="project" value="UniProtKB-UniRule"/>
</dbReference>
<dbReference type="GO" id="GO:0046306">
    <property type="term" value="P:alkanesulfonate catabolic process"/>
    <property type="evidence" value="ECO:0007669"/>
    <property type="project" value="TreeGrafter"/>
</dbReference>
<dbReference type="CDD" id="cd01094">
    <property type="entry name" value="Alkanesulfonate_monoxygenase"/>
    <property type="match status" value="1"/>
</dbReference>
<dbReference type="FunFam" id="3.20.20.30:FF:000001">
    <property type="entry name" value="Alkanesulfonate monooxygenase"/>
    <property type="match status" value="1"/>
</dbReference>
<dbReference type="Gene3D" id="3.20.20.30">
    <property type="entry name" value="Luciferase-like domain"/>
    <property type="match status" value="1"/>
</dbReference>
<dbReference type="HAMAP" id="MF_01229">
    <property type="entry name" value="Alkanesulf_monooxygen"/>
    <property type="match status" value="1"/>
</dbReference>
<dbReference type="InterPro" id="IPR019911">
    <property type="entry name" value="Alkanesulphonate_mOase_FMN-dep"/>
</dbReference>
<dbReference type="InterPro" id="IPR011251">
    <property type="entry name" value="Luciferase-like_dom"/>
</dbReference>
<dbReference type="InterPro" id="IPR036661">
    <property type="entry name" value="Luciferase-like_sf"/>
</dbReference>
<dbReference type="InterPro" id="IPR050172">
    <property type="entry name" value="SsuD_RutA_monooxygenase"/>
</dbReference>
<dbReference type="NCBIfam" id="TIGR03565">
    <property type="entry name" value="alk_sulf_monoox"/>
    <property type="match status" value="1"/>
</dbReference>
<dbReference type="NCBIfam" id="NF001939">
    <property type="entry name" value="PRK00719.1"/>
    <property type="match status" value="1"/>
</dbReference>
<dbReference type="PANTHER" id="PTHR42847">
    <property type="entry name" value="ALKANESULFONATE MONOOXYGENASE"/>
    <property type="match status" value="1"/>
</dbReference>
<dbReference type="PANTHER" id="PTHR42847:SF4">
    <property type="entry name" value="ALKANESULFONATE MONOOXYGENASE-RELATED"/>
    <property type="match status" value="1"/>
</dbReference>
<dbReference type="Pfam" id="PF00296">
    <property type="entry name" value="Bac_luciferase"/>
    <property type="match status" value="1"/>
</dbReference>
<dbReference type="SUPFAM" id="SSF51679">
    <property type="entry name" value="Bacterial luciferase-like"/>
    <property type="match status" value="1"/>
</dbReference>
<protein>
    <recommendedName>
        <fullName evidence="1">Alkanesulfonate monooxygenase</fullName>
        <ecNumber evidence="1">1.14.14.5</ecNumber>
    </recommendedName>
    <alternativeName>
        <fullName evidence="1">FMNH2-dependent aliphatic sulfonate monooxygenase</fullName>
    </alternativeName>
</protein>
<organism>
    <name type="scientific">Escherichia fergusonii (strain ATCC 35469 / DSM 13698 / CCUG 18766 / IAM 14443 / JCM 21226 / LMG 7866 / NBRC 102419 / NCTC 12128 / CDC 0568-73)</name>
    <dbReference type="NCBI Taxonomy" id="585054"/>
    <lineage>
        <taxon>Bacteria</taxon>
        <taxon>Pseudomonadati</taxon>
        <taxon>Pseudomonadota</taxon>
        <taxon>Gammaproteobacteria</taxon>
        <taxon>Enterobacterales</taxon>
        <taxon>Enterobacteriaceae</taxon>
        <taxon>Escherichia</taxon>
    </lineage>
</organism>
<reference key="1">
    <citation type="journal article" date="2009" name="PLoS Genet.">
        <title>Organised genome dynamics in the Escherichia coli species results in highly diverse adaptive paths.</title>
        <authorList>
            <person name="Touchon M."/>
            <person name="Hoede C."/>
            <person name="Tenaillon O."/>
            <person name="Barbe V."/>
            <person name="Baeriswyl S."/>
            <person name="Bidet P."/>
            <person name="Bingen E."/>
            <person name="Bonacorsi S."/>
            <person name="Bouchier C."/>
            <person name="Bouvet O."/>
            <person name="Calteau A."/>
            <person name="Chiapello H."/>
            <person name="Clermont O."/>
            <person name="Cruveiller S."/>
            <person name="Danchin A."/>
            <person name="Diard M."/>
            <person name="Dossat C."/>
            <person name="Karoui M.E."/>
            <person name="Frapy E."/>
            <person name="Garry L."/>
            <person name="Ghigo J.M."/>
            <person name="Gilles A.M."/>
            <person name="Johnson J."/>
            <person name="Le Bouguenec C."/>
            <person name="Lescat M."/>
            <person name="Mangenot S."/>
            <person name="Martinez-Jehanne V."/>
            <person name="Matic I."/>
            <person name="Nassif X."/>
            <person name="Oztas S."/>
            <person name="Petit M.A."/>
            <person name="Pichon C."/>
            <person name="Rouy Z."/>
            <person name="Ruf C.S."/>
            <person name="Schneider D."/>
            <person name="Tourret J."/>
            <person name="Vacherie B."/>
            <person name="Vallenet D."/>
            <person name="Medigue C."/>
            <person name="Rocha E.P.C."/>
            <person name="Denamur E."/>
        </authorList>
    </citation>
    <scope>NUCLEOTIDE SEQUENCE [LARGE SCALE GENOMIC DNA]</scope>
    <source>
        <strain>ATCC 35469 / DSM 13698 / BCRC 15582 / CCUG 18766 / IAM 14443 / JCM 21226 / LMG 7866 / NBRC 102419 / NCTC 12128 / CDC 0568-73</strain>
    </source>
</reference>
<accession>B7LNV2</accession>
<evidence type="ECO:0000255" key="1">
    <source>
        <dbReference type="HAMAP-Rule" id="MF_01229"/>
    </source>
</evidence>
<sequence>MSLNMFWFLPTHGDGHYLGTEEGSRSVDHGYLQQIAQVADRLGYTGVLIPTGRSCEDAWLVAASMIPVTQRLKFLVALRPSVTSPTVAARQAATLDRLSNGRALFNLVTGSDPQELAGDGVFLDHSERYEASAEFTQVWRRLLLGETVDFNGKHIHVRGAKLLFPPIQQPYPPLYFGGSSDVAQDLAAEQVDLYLTWGEPPELVKEKIAHVRAKAAAHGRKIRFGIRLHVIVRETNDEAWQAAERLISHLDDETIAKAQAAFARTDSVGQQRMAALHNGKRDNLEISPNLWAGVGLVRGGAGTALVGDGPTVAARINEYAALGIDSFVLSGYPHLEEAYRIGELLFPHLDVAIPEIPQPQLLNPQGEAVANDFIPRNVAQS</sequence>
<feature type="chain" id="PRO_1000139625" description="Alkanesulfonate monooxygenase">
    <location>
        <begin position="1"/>
        <end position="381"/>
    </location>
</feature>
<gene>
    <name evidence="1" type="primary">ssuD</name>
    <name type="ordered locus">EFER_1079</name>
</gene>